<dbReference type="EC" id="1.6.3.4" evidence="4"/>
<dbReference type="EMBL" id="AY046926">
    <property type="protein sequence ID" value="AAL02357.1"/>
    <property type="molecule type" value="Genomic_DNA"/>
</dbReference>
<dbReference type="EMBL" id="AM406671">
    <property type="protein sequence ID" value="CAL97012.1"/>
    <property type="molecule type" value="Genomic_DNA"/>
</dbReference>
<dbReference type="RefSeq" id="WP_011834457.1">
    <property type="nucleotide sequence ID" value="NC_009004.1"/>
</dbReference>
<dbReference type="SMR" id="A2RIB7"/>
<dbReference type="STRING" id="416870.llmg_0408"/>
<dbReference type="GeneID" id="61108710"/>
<dbReference type="KEGG" id="llm:llmg_0408"/>
<dbReference type="eggNOG" id="COG0446">
    <property type="taxonomic scope" value="Bacteria"/>
</dbReference>
<dbReference type="HOGENOM" id="CLU_003291_1_0_9"/>
<dbReference type="OrthoDB" id="9802028at2"/>
<dbReference type="PhylomeDB" id="A2RIB7"/>
<dbReference type="BRENDA" id="1.6.3.4">
    <property type="organism ID" value="2903"/>
</dbReference>
<dbReference type="SABIO-RK" id="A2RIB7"/>
<dbReference type="Proteomes" id="UP000000364">
    <property type="component" value="Chromosome"/>
</dbReference>
<dbReference type="GO" id="GO:0008137">
    <property type="term" value="F:NADH dehydrogenase (ubiquinone) activity"/>
    <property type="evidence" value="ECO:0007669"/>
    <property type="project" value="UniProtKB-EC"/>
</dbReference>
<dbReference type="Gene3D" id="3.30.390.30">
    <property type="match status" value="1"/>
</dbReference>
<dbReference type="Gene3D" id="3.50.50.60">
    <property type="entry name" value="FAD/NAD(P)-binding domain"/>
    <property type="match status" value="2"/>
</dbReference>
<dbReference type="InterPro" id="IPR050260">
    <property type="entry name" value="FAD-bd_OxRdtase"/>
</dbReference>
<dbReference type="InterPro" id="IPR036188">
    <property type="entry name" value="FAD/NAD-bd_sf"/>
</dbReference>
<dbReference type="InterPro" id="IPR023753">
    <property type="entry name" value="FAD/NAD-binding_dom"/>
</dbReference>
<dbReference type="InterPro" id="IPR016156">
    <property type="entry name" value="FAD/NAD-linked_Rdtase_dimer_sf"/>
</dbReference>
<dbReference type="InterPro" id="IPR004099">
    <property type="entry name" value="Pyr_nucl-diS_OxRdtase_dimer"/>
</dbReference>
<dbReference type="NCBIfam" id="NF046103">
    <property type="entry name" value="NOXase_Strep"/>
    <property type="match status" value="1"/>
</dbReference>
<dbReference type="PANTHER" id="PTHR43429:SF1">
    <property type="entry name" value="NAD(P)H SULFUR OXIDOREDUCTASE (COA-DEPENDENT)"/>
    <property type="match status" value="1"/>
</dbReference>
<dbReference type="PANTHER" id="PTHR43429">
    <property type="entry name" value="PYRIDINE NUCLEOTIDE-DISULFIDE OXIDOREDUCTASE DOMAIN-CONTAINING"/>
    <property type="match status" value="1"/>
</dbReference>
<dbReference type="Pfam" id="PF07992">
    <property type="entry name" value="Pyr_redox_2"/>
    <property type="match status" value="1"/>
</dbReference>
<dbReference type="Pfam" id="PF02852">
    <property type="entry name" value="Pyr_redox_dim"/>
    <property type="match status" value="1"/>
</dbReference>
<dbReference type="PRINTS" id="PR00368">
    <property type="entry name" value="FADPNR"/>
</dbReference>
<dbReference type="PRINTS" id="PR00411">
    <property type="entry name" value="PNDRDTASEI"/>
</dbReference>
<dbReference type="SUPFAM" id="SSF51905">
    <property type="entry name" value="FAD/NAD(P)-binding domain"/>
    <property type="match status" value="1"/>
</dbReference>
<dbReference type="SUPFAM" id="SSF55424">
    <property type="entry name" value="FAD/NAD-linked reductases, dimerisation (C-terminal) domain"/>
    <property type="match status" value="1"/>
</dbReference>
<comment type="function">
    <text evidence="4">Catalyzes the four-electron reduction of molecular oxygen to water. Active on beta-NADH, but not on alpha-NADH, beta-NADPH or alpha-NADPH. Under aerobic conditions, oxygen acts as the electron acceptor. Under anaerobic conditions, DCIP and MB can replace oxygen as the electron acceptor.</text>
</comment>
<comment type="catalytic activity">
    <molecule>NADH oxidase</molecule>
    <reaction evidence="4">
        <text>2 NADH + O2 + 2 H(+) = 2 NAD(+) + 2 H2O</text>
        <dbReference type="Rhea" id="RHEA:37799"/>
        <dbReference type="ChEBI" id="CHEBI:15377"/>
        <dbReference type="ChEBI" id="CHEBI:15378"/>
        <dbReference type="ChEBI" id="CHEBI:15379"/>
        <dbReference type="ChEBI" id="CHEBI:57540"/>
        <dbReference type="ChEBI" id="CHEBI:57945"/>
        <dbReference type="EC" id="1.6.3.4"/>
    </reaction>
</comment>
<comment type="cofactor">
    <cofactor evidence="4">
        <name>FAD</name>
        <dbReference type="ChEBI" id="CHEBI:57692"/>
    </cofactor>
    <text evidence="4">Binds 1 FAD per subunit.</text>
</comment>
<comment type="activity regulation">
    <text evidence="4">Inhibited by hydrogen peroxide, sulfhydryl reagents and quinine, but not by EDTA.</text>
</comment>
<comment type="biophysicochemical properties">
    <kinetics>
        <KM evidence="4">4.1 uM for beta-NADH (in the presence of oxygen)</KM>
        <Vmax evidence="4">83.0 umol/min/mg enzyme toward beta-NADH (in the presence of oxygen)</Vmax>
    </kinetics>
    <phDependence>
        <text evidence="4">Optimum pH is 6.0-9.0. Below pH 6.0 the enzyme is reversibly inactivated, above pH 10.0 the enzyme is irreversibly inactivated.</text>
    </phDependence>
</comment>
<comment type="subunit">
    <text evidence="4">Homodimer.</text>
</comment>
<comment type="similarity">
    <text evidence="3">Belongs to the class-III pyridine nucleotide-disulfide oxidoreductase family.</text>
</comment>
<protein>
    <recommendedName>
        <fullName>NADH oxidase</fullName>
        <shortName>NOXase</shortName>
        <ecNumber evidence="4">1.6.3.4</ecNumber>
    </recommendedName>
</protein>
<name>NAOX_LACLM</name>
<sequence length="446" mass="48872">MKIVVIGTNHAGIATANTLLEQYPGHEIVMIDRNSNMSYLGCGTAIWVGRQIEKPDELFYAKAEDFEAKGVKILTETEVSEIDFANKKVYAKTKSDDEIIEAYDKLVLATGSRPIIPNLPGKDLKGIHFLKLFQEGQAIDAEFAKEKVKRIAVIGAGYIGTEIAEAAKRRGKEVLLFDAENTSLASYYDEEFAKGMDENLAQHGIELHFGELAKEFKANEEGYVSQIVTNKATYDVDLVINCIGFTANSALASDKLATFKNGAIKVDKHQQSSDPDVYAVGDVATIYSNALQDFTYIALASNAVRSGIVAGHNIGGKELESVGVQGSNGISIFGYNMTSTGLSVKAAKKLGLEVSFSDFEDKQKAWFLHENNDSVKIRIVYETKSRRIIGAQLASKSEIIAGNINMFSLAIQEKKTIDELALLDLFFLPHFNSPYNYMTVAALNAK</sequence>
<keyword id="KW-0903">Direct protein sequencing</keyword>
<keyword id="KW-0274">FAD</keyword>
<keyword id="KW-0285">Flavoprotein</keyword>
<keyword id="KW-0520">NAD</keyword>
<keyword id="KW-0558">Oxidation</keyword>
<keyword id="KW-0560">Oxidoreductase</keyword>
<keyword id="KW-0676">Redox-active center</keyword>
<accession>A2RIB7</accession>
<accession>P81759</accession>
<accession>Q8KR34</accession>
<reference key="1">
    <citation type="journal article" date="2002" name="Microbiology">
        <title>Metabolic engineering of lactic acid bacteria, the combined approach: kinetic modelling, metabolic control and experimental analysis.</title>
        <authorList>
            <person name="Hoefnagel M.H.N."/>
            <person name="Starrenburg M.J.C."/>
            <person name="Martens D.E."/>
            <person name="Hugenholtz J."/>
            <person name="Kleerebezem M."/>
            <person name="Van Swam I.I."/>
            <person name="Bongers R."/>
            <person name="Westerhoff H.V."/>
            <person name="Snoep J.L."/>
        </authorList>
    </citation>
    <scope>NUCLEOTIDE SEQUENCE [GENOMIC DNA]</scope>
</reference>
<reference key="2">
    <citation type="journal article" date="2007" name="J. Bacteriol.">
        <title>The complete genome sequence of the lactic acid bacterial paradigm Lactococcus lactis subsp. cremoris MG1363.</title>
        <authorList>
            <person name="Wegmann U."/>
            <person name="O'Connell-Motherway M."/>
            <person name="Zomer A."/>
            <person name="Buist G."/>
            <person name="Shearman C."/>
            <person name="Canchaya C."/>
            <person name="Ventura M."/>
            <person name="Goesmann A."/>
            <person name="Gasson M.J."/>
            <person name="Kuipers O.P."/>
            <person name="van Sinderen D."/>
            <person name="Kok J."/>
        </authorList>
    </citation>
    <scope>NUCLEOTIDE SEQUENCE [LARGE SCALE GENOMIC DNA]</scope>
    <source>
        <strain>MG1363</strain>
    </source>
</reference>
<reference evidence="5" key="3">
    <citation type="journal article" date="2001" name="Int. Dairy J.">
        <title>Purification and characterisation of the water forming NADH-oxidase from Lactococcus lactis.</title>
        <authorList>
            <person name="Lopez de Felipe F."/>
            <person name="Hugenholtz J."/>
        </authorList>
        <dbReference type="AGRICOLA" id="IND23261759"/>
    </citation>
    <scope>PROTEIN SEQUENCE OF 1-25</scope>
    <scope>FUNCTION</scope>
    <scope>CATALYTIC ACTIVITY</scope>
    <scope>COFACTOR</scope>
    <scope>ACTIVITY REGULATION</scope>
    <scope>BIOPHYSICOCHEMICAL PROPERTIES</scope>
    <scope>SUBUNIT</scope>
</reference>
<gene>
    <name evidence="6" type="primary">noxE</name>
    <name type="ordered locus">llmg_0408</name>
</gene>
<organism>
    <name type="scientific">Lactococcus lactis subsp. cremoris (strain MG1363)</name>
    <dbReference type="NCBI Taxonomy" id="416870"/>
    <lineage>
        <taxon>Bacteria</taxon>
        <taxon>Bacillati</taxon>
        <taxon>Bacillota</taxon>
        <taxon>Bacilli</taxon>
        <taxon>Lactobacillales</taxon>
        <taxon>Streptococcaceae</taxon>
        <taxon>Lactococcus</taxon>
        <taxon>Lactococcus cremoris subsp. cremoris</taxon>
    </lineage>
</organism>
<feature type="chain" id="PRO_0000292941" description="NADH oxidase">
    <location>
        <begin position="1"/>
        <end position="446"/>
    </location>
</feature>
<feature type="active site" description="Proton acceptor" evidence="1">
    <location>
        <position position="10"/>
    </location>
</feature>
<feature type="active site" description="Redox-active" evidence="1">
    <location>
        <position position="42"/>
    </location>
</feature>
<feature type="binding site" evidence="1">
    <location>
        <begin position="7"/>
        <end position="11"/>
    </location>
    <ligand>
        <name>FAD</name>
        <dbReference type="ChEBI" id="CHEBI:57692"/>
    </ligand>
</feature>
<feature type="binding site" evidence="2">
    <location>
        <position position="32"/>
    </location>
    <ligand>
        <name>FAD</name>
        <dbReference type="ChEBI" id="CHEBI:57692"/>
    </ligand>
</feature>
<feature type="binding site" evidence="1">
    <location>
        <position position="42"/>
    </location>
    <ligand>
        <name>FAD</name>
        <dbReference type="ChEBI" id="CHEBI:57692"/>
    </ligand>
</feature>
<feature type="binding site" evidence="2">
    <location>
        <position position="79"/>
    </location>
    <ligand>
        <name>FAD</name>
        <dbReference type="ChEBI" id="CHEBI:57692"/>
    </ligand>
</feature>
<feature type="binding site" evidence="1">
    <location>
        <begin position="109"/>
        <end position="112"/>
    </location>
    <ligand>
        <name>FAD</name>
        <dbReference type="ChEBI" id="CHEBI:57692"/>
    </ligand>
</feature>
<feature type="binding site" evidence="2">
    <location>
        <position position="131"/>
    </location>
    <ligand>
        <name>FAD</name>
        <dbReference type="ChEBI" id="CHEBI:57692"/>
    </ligand>
</feature>
<feature type="binding site" evidence="2">
    <location>
        <position position="158"/>
    </location>
    <ligand>
        <name>FAD</name>
        <dbReference type="ChEBI" id="CHEBI:57692"/>
    </ligand>
</feature>
<feature type="binding site" evidence="1">
    <location>
        <position position="159"/>
    </location>
    <ligand>
        <name>NAD(+)</name>
        <dbReference type="ChEBI" id="CHEBI:57540"/>
    </ligand>
</feature>
<feature type="binding site" evidence="1">
    <location>
        <position position="178"/>
    </location>
    <ligand>
        <name>NAD(+)</name>
        <dbReference type="ChEBI" id="CHEBI:57540"/>
    </ligand>
</feature>
<feature type="binding site" evidence="1">
    <location>
        <position position="187"/>
    </location>
    <ligand>
        <name>NAD(+)</name>
        <dbReference type="ChEBI" id="CHEBI:57540"/>
    </ligand>
</feature>
<feature type="binding site" evidence="1">
    <location>
        <position position="244"/>
    </location>
    <ligand>
        <name>NAD(+)</name>
        <dbReference type="ChEBI" id="CHEBI:57540"/>
    </ligand>
</feature>
<feature type="binding site" evidence="1">
    <location>
        <position position="282"/>
    </location>
    <ligand>
        <name>FAD</name>
        <dbReference type="ChEBI" id="CHEBI:57692"/>
    </ligand>
</feature>
<feature type="binding site" evidence="1">
    <location>
        <position position="298"/>
    </location>
    <ligand>
        <name>NAD(+)</name>
        <dbReference type="ChEBI" id="CHEBI:57540"/>
    </ligand>
</feature>
<feature type="binding site" evidence="2">
    <location>
        <position position="299"/>
    </location>
    <ligand>
        <name>FAD</name>
        <dbReference type="ChEBI" id="CHEBI:57692"/>
    </ligand>
</feature>
<feature type="binding site" evidence="1">
    <location>
        <position position="300"/>
    </location>
    <ligand>
        <name>FAD</name>
        <dbReference type="ChEBI" id="CHEBI:57692"/>
    </ligand>
</feature>
<feature type="binding site" evidence="2">
    <location>
        <position position="301"/>
    </location>
    <ligand>
        <name>FAD</name>
        <dbReference type="ChEBI" id="CHEBI:57692"/>
    </ligand>
</feature>
<feature type="binding site" evidence="1">
    <location>
        <position position="329"/>
    </location>
    <ligand>
        <name>NAD(+)</name>
        <dbReference type="ChEBI" id="CHEBI:57540"/>
    </ligand>
</feature>
<feature type="binding site" evidence="2">
    <location>
        <position position="427"/>
    </location>
    <ligand>
        <name>FAD</name>
        <dbReference type="ChEBI" id="CHEBI:57692"/>
    </ligand>
</feature>
<feature type="modified residue" description="Cysteine sulfinic acid (-SO2H)" evidence="2">
    <location>
        <position position="42"/>
    </location>
</feature>
<feature type="sequence conflict" description="In Ref. 3; AA sequence." evidence="5" ref="3">
    <original>A</original>
    <variation>AA</variation>
    <location>
        <position position="11"/>
    </location>
</feature>
<evidence type="ECO:0000250" key="1">
    <source>
        <dbReference type="UniProtKB" id="P37062"/>
    </source>
</evidence>
<evidence type="ECO:0000250" key="2">
    <source>
        <dbReference type="UniProtKB" id="Q5XC60"/>
    </source>
</evidence>
<evidence type="ECO:0000255" key="3"/>
<evidence type="ECO:0000269" key="4">
    <source ref="3"/>
</evidence>
<evidence type="ECO:0000305" key="5"/>
<evidence type="ECO:0000312" key="6">
    <source>
        <dbReference type="EMBL" id="CAL97012.1"/>
    </source>
</evidence>
<proteinExistence type="evidence at protein level"/>